<reference key="1">
    <citation type="journal article" date="2003" name="DNA Res.">
        <title>Complete genome structure of Gloeobacter violaceus PCC 7421, a cyanobacterium that lacks thylakoids.</title>
        <authorList>
            <person name="Nakamura Y."/>
            <person name="Kaneko T."/>
            <person name="Sato S."/>
            <person name="Mimuro M."/>
            <person name="Miyashita H."/>
            <person name="Tsuchiya T."/>
            <person name="Sasamoto S."/>
            <person name="Watanabe A."/>
            <person name="Kawashima K."/>
            <person name="Kishida Y."/>
            <person name="Kiyokawa C."/>
            <person name="Kohara M."/>
            <person name="Matsumoto M."/>
            <person name="Matsuno A."/>
            <person name="Nakazaki N."/>
            <person name="Shimpo S."/>
            <person name="Takeuchi C."/>
            <person name="Yamada M."/>
            <person name="Tabata S."/>
        </authorList>
    </citation>
    <scope>NUCLEOTIDE SEQUENCE [LARGE SCALE GENOMIC DNA]</scope>
    <source>
        <strain>ATCC 29082 / PCC 7421</strain>
    </source>
</reference>
<feature type="chain" id="PRO_0000358409" description="NAD(P)H-quinone oxidoreductase subunit K 2">
    <location>
        <begin position="1"/>
        <end position="249"/>
    </location>
</feature>
<feature type="binding site" evidence="1">
    <location>
        <position position="54"/>
    </location>
    <ligand>
        <name>[4Fe-4S] cluster</name>
        <dbReference type="ChEBI" id="CHEBI:49883"/>
    </ligand>
</feature>
<feature type="binding site" evidence="1">
    <location>
        <position position="55"/>
    </location>
    <ligand>
        <name>[4Fe-4S] cluster</name>
        <dbReference type="ChEBI" id="CHEBI:49883"/>
    </ligand>
</feature>
<feature type="binding site" evidence="1">
    <location>
        <position position="119"/>
    </location>
    <ligand>
        <name>[4Fe-4S] cluster</name>
        <dbReference type="ChEBI" id="CHEBI:49883"/>
    </ligand>
</feature>
<feature type="binding site" evidence="1">
    <location>
        <position position="150"/>
    </location>
    <ligand>
        <name>[4Fe-4S] cluster</name>
        <dbReference type="ChEBI" id="CHEBI:49883"/>
    </ligand>
</feature>
<sequence>MFNDRPQTDRMFFPPERPEVTSELSNNVVLTTLNDLYNWARLSSVWPLMYGTACCFIEFAGLIGSRFDFDRFGLVPRASPRQADLIITAGTITMKFAPALVTLYQQMPEPKYVIAMGACTITGGMFSTDSPTTVRGVDKLIPVDVYIPGCPPRPEAIFDAIIKLRKKMATEDFRERYDTIAQTHRYYTAAHRMKAVADPLTSEYIRLESRQAAPPALAAAIEMGIPLDLQRTPQLEEQIRDGEHRDARA</sequence>
<accession>Q7NI05</accession>
<name>NDHK2_GLOVI</name>
<proteinExistence type="inferred from homology"/>
<keyword id="KW-0004">4Fe-4S</keyword>
<keyword id="KW-0997">Cell inner membrane</keyword>
<keyword id="KW-1003">Cell membrane</keyword>
<keyword id="KW-0408">Iron</keyword>
<keyword id="KW-0411">Iron-sulfur</keyword>
<keyword id="KW-0472">Membrane</keyword>
<keyword id="KW-0479">Metal-binding</keyword>
<keyword id="KW-0520">NAD</keyword>
<keyword id="KW-0521">NADP</keyword>
<keyword id="KW-0618">Plastoquinone</keyword>
<keyword id="KW-0874">Quinone</keyword>
<keyword id="KW-1185">Reference proteome</keyword>
<keyword id="KW-1278">Translocase</keyword>
<keyword id="KW-0813">Transport</keyword>
<gene>
    <name evidence="1" type="primary">ndhK2</name>
    <name type="ordered locus">glr2379</name>
</gene>
<evidence type="ECO:0000255" key="1">
    <source>
        <dbReference type="HAMAP-Rule" id="MF_01356"/>
    </source>
</evidence>
<protein>
    <recommendedName>
        <fullName evidence="1">NAD(P)H-quinone oxidoreductase subunit K 2</fullName>
        <ecNumber evidence="1">7.1.1.-</ecNumber>
    </recommendedName>
    <alternativeName>
        <fullName evidence="1">NAD(P)H dehydrogenase I subunit K 2</fullName>
    </alternativeName>
    <alternativeName>
        <fullName evidence="1">NDH-1 subunit K 2</fullName>
        <shortName evidence="1">NDH-K 2</shortName>
    </alternativeName>
</protein>
<comment type="function">
    <text evidence="1">NDH-1 shuttles electrons from an unknown electron donor, via FMN and iron-sulfur (Fe-S) centers, to quinones in the respiratory and/or the photosynthetic chain. The immediate electron acceptor for the enzyme in this species is believed to be plastoquinone. Couples the redox reaction to proton translocation, and thus conserves the redox energy in a proton gradient. Cyanobacterial NDH-1 also plays a role in inorganic carbon-concentration.</text>
</comment>
<comment type="catalytic activity">
    <reaction evidence="1">
        <text>a plastoquinone + NADH + (n+1) H(+)(in) = a plastoquinol + NAD(+) + n H(+)(out)</text>
        <dbReference type="Rhea" id="RHEA:42608"/>
        <dbReference type="Rhea" id="RHEA-COMP:9561"/>
        <dbReference type="Rhea" id="RHEA-COMP:9562"/>
        <dbReference type="ChEBI" id="CHEBI:15378"/>
        <dbReference type="ChEBI" id="CHEBI:17757"/>
        <dbReference type="ChEBI" id="CHEBI:57540"/>
        <dbReference type="ChEBI" id="CHEBI:57945"/>
        <dbReference type="ChEBI" id="CHEBI:62192"/>
    </reaction>
</comment>
<comment type="catalytic activity">
    <reaction evidence="1">
        <text>a plastoquinone + NADPH + (n+1) H(+)(in) = a plastoquinol + NADP(+) + n H(+)(out)</text>
        <dbReference type="Rhea" id="RHEA:42612"/>
        <dbReference type="Rhea" id="RHEA-COMP:9561"/>
        <dbReference type="Rhea" id="RHEA-COMP:9562"/>
        <dbReference type="ChEBI" id="CHEBI:15378"/>
        <dbReference type="ChEBI" id="CHEBI:17757"/>
        <dbReference type="ChEBI" id="CHEBI:57783"/>
        <dbReference type="ChEBI" id="CHEBI:58349"/>
        <dbReference type="ChEBI" id="CHEBI:62192"/>
    </reaction>
</comment>
<comment type="cofactor">
    <cofactor evidence="1">
        <name>[4Fe-4S] cluster</name>
        <dbReference type="ChEBI" id="CHEBI:49883"/>
    </cofactor>
    <text evidence="1">Binds 1 [4Fe-4S] cluster.</text>
</comment>
<comment type="subunit">
    <text evidence="1">NDH-1 can be composed of about 15 different subunits; different subcomplexes with different compositions have been identified which probably have different functions.</text>
</comment>
<comment type="subcellular location">
    <subcellularLocation>
        <location evidence="1">Cell inner membrane</location>
        <topology evidence="1">Peripheral membrane protein</topology>
        <orientation evidence="1">Cytoplasmic side</orientation>
    </subcellularLocation>
</comment>
<comment type="similarity">
    <text evidence="1">Belongs to the complex I 20 kDa subunit family.</text>
</comment>
<organism>
    <name type="scientific">Gloeobacter violaceus (strain ATCC 29082 / PCC 7421)</name>
    <dbReference type="NCBI Taxonomy" id="251221"/>
    <lineage>
        <taxon>Bacteria</taxon>
        <taxon>Bacillati</taxon>
        <taxon>Cyanobacteriota</taxon>
        <taxon>Cyanophyceae</taxon>
        <taxon>Gloeobacterales</taxon>
        <taxon>Gloeobacteraceae</taxon>
        <taxon>Gloeobacter</taxon>
    </lineage>
</organism>
<dbReference type="EC" id="7.1.1.-" evidence="1"/>
<dbReference type="EMBL" id="BA000045">
    <property type="protein sequence ID" value="BAC90320.1"/>
    <property type="molecule type" value="Genomic_DNA"/>
</dbReference>
<dbReference type="RefSeq" id="NP_925325.1">
    <property type="nucleotide sequence ID" value="NC_005125.1"/>
</dbReference>
<dbReference type="RefSeq" id="WP_011142375.1">
    <property type="nucleotide sequence ID" value="NC_005125.1"/>
</dbReference>
<dbReference type="SMR" id="Q7NI05"/>
<dbReference type="FunCoup" id="Q7NI05">
    <property type="interactions" value="313"/>
</dbReference>
<dbReference type="STRING" id="251221.gene:10759876"/>
<dbReference type="EnsemblBacteria" id="BAC90320">
    <property type="protein sequence ID" value="BAC90320"/>
    <property type="gene ID" value="BAC90320"/>
</dbReference>
<dbReference type="KEGG" id="gvi:glr2379"/>
<dbReference type="PATRIC" id="fig|251221.4.peg.2418"/>
<dbReference type="eggNOG" id="COG0377">
    <property type="taxonomic scope" value="Bacteria"/>
</dbReference>
<dbReference type="HOGENOM" id="CLU_055737_2_1_3"/>
<dbReference type="InParanoid" id="Q7NI05"/>
<dbReference type="OrthoDB" id="9786737at2"/>
<dbReference type="PhylomeDB" id="Q7NI05"/>
<dbReference type="Proteomes" id="UP000000557">
    <property type="component" value="Chromosome"/>
</dbReference>
<dbReference type="GO" id="GO:0005886">
    <property type="term" value="C:plasma membrane"/>
    <property type="evidence" value="ECO:0007669"/>
    <property type="project" value="UniProtKB-SubCell"/>
</dbReference>
<dbReference type="GO" id="GO:0045271">
    <property type="term" value="C:respiratory chain complex I"/>
    <property type="evidence" value="ECO:0000318"/>
    <property type="project" value="GO_Central"/>
</dbReference>
<dbReference type="GO" id="GO:0051539">
    <property type="term" value="F:4 iron, 4 sulfur cluster binding"/>
    <property type="evidence" value="ECO:0007669"/>
    <property type="project" value="UniProtKB-KW"/>
</dbReference>
<dbReference type="GO" id="GO:0005506">
    <property type="term" value="F:iron ion binding"/>
    <property type="evidence" value="ECO:0007669"/>
    <property type="project" value="UniProtKB-UniRule"/>
</dbReference>
<dbReference type="GO" id="GO:0008137">
    <property type="term" value="F:NADH dehydrogenase (ubiquinone) activity"/>
    <property type="evidence" value="ECO:0000318"/>
    <property type="project" value="GO_Central"/>
</dbReference>
<dbReference type="GO" id="GO:0048038">
    <property type="term" value="F:quinone binding"/>
    <property type="evidence" value="ECO:0007669"/>
    <property type="project" value="UniProtKB-KW"/>
</dbReference>
<dbReference type="GO" id="GO:0009060">
    <property type="term" value="P:aerobic respiration"/>
    <property type="evidence" value="ECO:0000318"/>
    <property type="project" value="GO_Central"/>
</dbReference>
<dbReference type="GO" id="GO:0015990">
    <property type="term" value="P:electron transport coupled proton transport"/>
    <property type="evidence" value="ECO:0000318"/>
    <property type="project" value="GO_Central"/>
</dbReference>
<dbReference type="GO" id="GO:0019684">
    <property type="term" value="P:photosynthesis, light reaction"/>
    <property type="evidence" value="ECO:0007669"/>
    <property type="project" value="UniProtKB-UniRule"/>
</dbReference>
<dbReference type="FunFam" id="3.40.50.12280:FF:000003">
    <property type="entry name" value="NAD(P)H-quinone oxidoreductase subunit K, chloroplastic"/>
    <property type="match status" value="1"/>
</dbReference>
<dbReference type="Gene3D" id="3.40.50.12280">
    <property type="match status" value="1"/>
</dbReference>
<dbReference type="HAMAP" id="MF_01356">
    <property type="entry name" value="NDH1_NuoB"/>
    <property type="match status" value="1"/>
</dbReference>
<dbReference type="InterPro" id="IPR006137">
    <property type="entry name" value="NADH_UbQ_OxRdtase-like_20kDa"/>
</dbReference>
<dbReference type="InterPro" id="IPR006138">
    <property type="entry name" value="NADH_UQ_OxRdtase_20Kd_su"/>
</dbReference>
<dbReference type="NCBIfam" id="TIGR01957">
    <property type="entry name" value="nuoB_fam"/>
    <property type="match status" value="1"/>
</dbReference>
<dbReference type="NCBIfam" id="NF005012">
    <property type="entry name" value="PRK06411.1"/>
    <property type="match status" value="1"/>
</dbReference>
<dbReference type="PANTHER" id="PTHR11995">
    <property type="entry name" value="NADH DEHYDROGENASE"/>
    <property type="match status" value="1"/>
</dbReference>
<dbReference type="PANTHER" id="PTHR11995:SF14">
    <property type="entry name" value="NADH DEHYDROGENASE [UBIQUINONE] IRON-SULFUR PROTEIN 7, MITOCHONDRIAL"/>
    <property type="match status" value="1"/>
</dbReference>
<dbReference type="Pfam" id="PF01058">
    <property type="entry name" value="Oxidored_q6"/>
    <property type="match status" value="1"/>
</dbReference>
<dbReference type="SUPFAM" id="SSF56770">
    <property type="entry name" value="HydA/Nqo6-like"/>
    <property type="match status" value="1"/>
</dbReference>
<dbReference type="PROSITE" id="PS01150">
    <property type="entry name" value="COMPLEX1_20K"/>
    <property type="match status" value="1"/>
</dbReference>